<feature type="signal peptide" evidence="1">
    <location>
        <begin position="1"/>
        <end position="26"/>
    </location>
</feature>
<feature type="chain" id="PRO_0000270016" description="Chaperone SurA">
    <location>
        <begin position="27"/>
        <end position="432"/>
    </location>
</feature>
<feature type="domain" description="PpiC 1" evidence="1">
    <location>
        <begin position="176"/>
        <end position="277"/>
    </location>
</feature>
<feature type="domain" description="PpiC 2" evidence="1">
    <location>
        <begin position="286"/>
        <end position="386"/>
    </location>
</feature>
<comment type="function">
    <text evidence="1">Chaperone involved in the correct folding and assembly of outer membrane proteins. Recognizes specific patterns of aromatic residues and the orientation of their side chains, which are found more frequently in integral outer membrane proteins. May act in both early periplasmic and late outer membrane-associated steps of protein maturation.</text>
</comment>
<comment type="catalytic activity">
    <reaction evidence="1">
        <text>[protein]-peptidylproline (omega=180) = [protein]-peptidylproline (omega=0)</text>
        <dbReference type="Rhea" id="RHEA:16237"/>
        <dbReference type="Rhea" id="RHEA-COMP:10747"/>
        <dbReference type="Rhea" id="RHEA-COMP:10748"/>
        <dbReference type="ChEBI" id="CHEBI:83833"/>
        <dbReference type="ChEBI" id="CHEBI:83834"/>
        <dbReference type="EC" id="5.2.1.8"/>
    </reaction>
</comment>
<comment type="subcellular location">
    <subcellularLocation>
        <location evidence="1">Periplasm</location>
    </subcellularLocation>
    <text evidence="1">Is capable of associating with the outer membrane.</text>
</comment>
<comment type="domain">
    <text evidence="1">The PPIase activity resides only in the second parvulin domain. The N-terminal region and the C-terminal tail are necessary and sufficient for the chaperone activity of SurA. The PPIase activity is dispensable for SurA to function as a chaperone. The N-terminal region and the C-terminal tail are also required for porin recognition.</text>
</comment>
<accession>Q5QVN9</accession>
<dbReference type="EC" id="5.2.1.8" evidence="1"/>
<dbReference type="EMBL" id="AE017340">
    <property type="protein sequence ID" value="AAV83062.1"/>
    <property type="molecule type" value="Genomic_DNA"/>
</dbReference>
<dbReference type="RefSeq" id="WP_011235457.1">
    <property type="nucleotide sequence ID" value="NC_006512.1"/>
</dbReference>
<dbReference type="SMR" id="Q5QVN9"/>
<dbReference type="STRING" id="283942.IL2230"/>
<dbReference type="GeneID" id="41337419"/>
<dbReference type="KEGG" id="ilo:IL2230"/>
<dbReference type="eggNOG" id="COG0760">
    <property type="taxonomic scope" value="Bacteria"/>
</dbReference>
<dbReference type="HOGENOM" id="CLU_034646_11_0_6"/>
<dbReference type="OrthoDB" id="14196at2"/>
<dbReference type="Proteomes" id="UP000001171">
    <property type="component" value="Chromosome"/>
</dbReference>
<dbReference type="GO" id="GO:0030288">
    <property type="term" value="C:outer membrane-bounded periplasmic space"/>
    <property type="evidence" value="ECO:0007669"/>
    <property type="project" value="InterPro"/>
</dbReference>
<dbReference type="GO" id="GO:0042277">
    <property type="term" value="F:peptide binding"/>
    <property type="evidence" value="ECO:0007669"/>
    <property type="project" value="InterPro"/>
</dbReference>
<dbReference type="GO" id="GO:0003755">
    <property type="term" value="F:peptidyl-prolyl cis-trans isomerase activity"/>
    <property type="evidence" value="ECO:0007669"/>
    <property type="project" value="UniProtKB-UniRule"/>
</dbReference>
<dbReference type="GO" id="GO:0051082">
    <property type="term" value="F:unfolded protein binding"/>
    <property type="evidence" value="ECO:0007669"/>
    <property type="project" value="UniProtKB-UniRule"/>
</dbReference>
<dbReference type="GO" id="GO:0043165">
    <property type="term" value="P:Gram-negative-bacterium-type cell outer membrane assembly"/>
    <property type="evidence" value="ECO:0007669"/>
    <property type="project" value="InterPro"/>
</dbReference>
<dbReference type="GO" id="GO:0006457">
    <property type="term" value="P:protein folding"/>
    <property type="evidence" value="ECO:0007669"/>
    <property type="project" value="UniProtKB-UniRule"/>
</dbReference>
<dbReference type="GO" id="GO:0050821">
    <property type="term" value="P:protein stabilization"/>
    <property type="evidence" value="ECO:0007669"/>
    <property type="project" value="InterPro"/>
</dbReference>
<dbReference type="Gene3D" id="3.10.50.40">
    <property type="match status" value="2"/>
</dbReference>
<dbReference type="Gene3D" id="1.10.4030.10">
    <property type="entry name" value="Porin chaperone SurA, peptide-binding domain"/>
    <property type="match status" value="1"/>
</dbReference>
<dbReference type="HAMAP" id="MF_01183">
    <property type="entry name" value="Chaperone_SurA"/>
    <property type="match status" value="1"/>
</dbReference>
<dbReference type="InterPro" id="IPR050280">
    <property type="entry name" value="OMP_Chaperone_SurA"/>
</dbReference>
<dbReference type="InterPro" id="IPR046357">
    <property type="entry name" value="PPIase_dom_sf"/>
</dbReference>
<dbReference type="InterPro" id="IPR000297">
    <property type="entry name" value="PPIase_PpiC"/>
</dbReference>
<dbReference type="InterPro" id="IPR023058">
    <property type="entry name" value="PPIase_PpiC_CS"/>
</dbReference>
<dbReference type="InterPro" id="IPR023034">
    <property type="entry name" value="PPIase_SurA"/>
</dbReference>
<dbReference type="InterPro" id="IPR015391">
    <property type="entry name" value="SurA_N"/>
</dbReference>
<dbReference type="InterPro" id="IPR027304">
    <property type="entry name" value="Trigger_fact/SurA_dom_sf"/>
</dbReference>
<dbReference type="NCBIfam" id="NF008038">
    <property type="entry name" value="PRK10770.1"/>
    <property type="match status" value="1"/>
</dbReference>
<dbReference type="PANTHER" id="PTHR47637">
    <property type="entry name" value="CHAPERONE SURA"/>
    <property type="match status" value="1"/>
</dbReference>
<dbReference type="PANTHER" id="PTHR47637:SF1">
    <property type="entry name" value="CHAPERONE SURA"/>
    <property type="match status" value="1"/>
</dbReference>
<dbReference type="Pfam" id="PF00639">
    <property type="entry name" value="Rotamase"/>
    <property type="match status" value="1"/>
</dbReference>
<dbReference type="Pfam" id="PF13616">
    <property type="entry name" value="Rotamase_3"/>
    <property type="match status" value="1"/>
</dbReference>
<dbReference type="Pfam" id="PF09312">
    <property type="entry name" value="SurA_N"/>
    <property type="match status" value="1"/>
</dbReference>
<dbReference type="SUPFAM" id="SSF54534">
    <property type="entry name" value="FKBP-like"/>
    <property type="match status" value="2"/>
</dbReference>
<dbReference type="SUPFAM" id="SSF109998">
    <property type="entry name" value="Triger factor/SurA peptide-binding domain-like"/>
    <property type="match status" value="1"/>
</dbReference>
<dbReference type="PROSITE" id="PS01096">
    <property type="entry name" value="PPIC_PPIASE_1"/>
    <property type="match status" value="1"/>
</dbReference>
<dbReference type="PROSITE" id="PS50198">
    <property type="entry name" value="PPIC_PPIASE_2"/>
    <property type="match status" value="2"/>
</dbReference>
<gene>
    <name evidence="1" type="primary">surA</name>
    <name type="ordered locus">IL2230</name>
</gene>
<keyword id="KW-0143">Chaperone</keyword>
<keyword id="KW-0413">Isomerase</keyword>
<keyword id="KW-0574">Periplasm</keyword>
<keyword id="KW-1185">Reference proteome</keyword>
<keyword id="KW-0677">Repeat</keyword>
<keyword id="KW-0697">Rotamase</keyword>
<keyword id="KW-0732">Signal</keyword>
<sequence length="432" mass="48272">MKKIASFCSAAVLIASSFLLNNTVQAQQILDRVVVVVDDGVVLQSQIDQLIQQVKNGQNFNSSNAPSDEVLETQAIERLILQEIQLQMANRMGIEIDDNQLEQAINEIANNQDLTTAELRENMVSSGMSWAAYRENIRNELVIQQVQRAAVQQRVSITPQEINNLVKLIESNQEVQTEYRLAQILISADSNSSQAELEKAKERANTVLNLLDKGSDFADLAVRSSSGSAALDGGDLGWMTVNGMPTLFAEAVDGKSVGDVVGPIRSGIGFHILKVQDKRGEQTVEVQEVKARHILIKPSVILSDNKAKEMLNKYREQIASGEKTFAELAREHSADPGSASRGGDLGWARPNKYAPEFKQKVESIEQDTISEPFSTQFGWHIVEVTGRRTLDATEENKQERAYQMLFSRKFREELDNWQQEIRDQAFIRRVAE</sequence>
<evidence type="ECO:0000255" key="1">
    <source>
        <dbReference type="HAMAP-Rule" id="MF_01183"/>
    </source>
</evidence>
<proteinExistence type="inferred from homology"/>
<name>SURA_IDILO</name>
<protein>
    <recommendedName>
        <fullName evidence="1">Chaperone SurA</fullName>
    </recommendedName>
    <alternativeName>
        <fullName evidence="1">Peptidyl-prolyl cis-trans isomerase SurA</fullName>
        <shortName evidence="1">PPIase SurA</shortName>
        <ecNumber evidence="1">5.2.1.8</ecNumber>
    </alternativeName>
    <alternativeName>
        <fullName evidence="1">Rotamase SurA</fullName>
    </alternativeName>
</protein>
<organism>
    <name type="scientific">Idiomarina loihiensis (strain ATCC BAA-735 / DSM 15497 / L2-TR)</name>
    <dbReference type="NCBI Taxonomy" id="283942"/>
    <lineage>
        <taxon>Bacteria</taxon>
        <taxon>Pseudomonadati</taxon>
        <taxon>Pseudomonadota</taxon>
        <taxon>Gammaproteobacteria</taxon>
        <taxon>Alteromonadales</taxon>
        <taxon>Idiomarinaceae</taxon>
        <taxon>Idiomarina</taxon>
    </lineage>
</organism>
<reference key="1">
    <citation type="journal article" date="2004" name="Proc. Natl. Acad. Sci. U.S.A.">
        <title>Genome sequence of the deep-sea gamma-proteobacterium Idiomarina loihiensis reveals amino acid fermentation as a source of carbon and energy.</title>
        <authorList>
            <person name="Hou S."/>
            <person name="Saw J.H."/>
            <person name="Lee K.S."/>
            <person name="Freitas T.A."/>
            <person name="Belisle C."/>
            <person name="Kawarabayasi Y."/>
            <person name="Donachie S.P."/>
            <person name="Pikina A."/>
            <person name="Galperin M.Y."/>
            <person name="Koonin E.V."/>
            <person name="Makarova K.S."/>
            <person name="Omelchenko M.V."/>
            <person name="Sorokin A."/>
            <person name="Wolf Y.I."/>
            <person name="Li Q.X."/>
            <person name="Keum Y.S."/>
            <person name="Campbell S."/>
            <person name="Denery J."/>
            <person name="Aizawa S."/>
            <person name="Shibata S."/>
            <person name="Malahoff A."/>
            <person name="Alam M."/>
        </authorList>
    </citation>
    <scope>NUCLEOTIDE SEQUENCE [LARGE SCALE GENOMIC DNA]</scope>
    <source>
        <strain>ATCC BAA-735 / DSM 15497 / L2-TR</strain>
    </source>
</reference>